<feature type="chain" id="PRO_0000140889" description="Methenyltetrahydromethanopterin cyclohydrolase">
    <location>
        <begin position="1"/>
        <end position="323"/>
    </location>
</feature>
<name>MCH_METEA</name>
<evidence type="ECO:0000305" key="1"/>
<reference key="1">
    <citation type="journal article" date="1998" name="Science">
        <title>C1 transfer enzymes and coenzymes linking methylotrophic bacteria and methanogenic Archaea.</title>
        <authorList>
            <person name="Chistoserdova L.V."/>
            <person name="Vorholt J.A."/>
            <person name="Thauer R.K."/>
            <person name="Lidstrom M.E."/>
        </authorList>
    </citation>
    <scope>NUCLEOTIDE SEQUENCE [GENOMIC DNA]</scope>
</reference>
<reference key="2">
    <citation type="journal article" date="2009" name="PLoS ONE">
        <title>Methylobacterium genome sequences: a reference blueprint to investigate microbial metabolism of C1 compounds from natural and industrial sources.</title>
        <authorList>
            <person name="Vuilleumier S."/>
            <person name="Chistoserdova L."/>
            <person name="Lee M.-C."/>
            <person name="Bringel F."/>
            <person name="Lajus A."/>
            <person name="Zhou Y."/>
            <person name="Gourion B."/>
            <person name="Barbe V."/>
            <person name="Chang J."/>
            <person name="Cruveiller S."/>
            <person name="Dossat C."/>
            <person name="Gillett W."/>
            <person name="Gruffaz C."/>
            <person name="Haugen E."/>
            <person name="Hourcade E."/>
            <person name="Levy R."/>
            <person name="Mangenot S."/>
            <person name="Muller E."/>
            <person name="Nadalig T."/>
            <person name="Pagni M."/>
            <person name="Penny C."/>
            <person name="Peyraud R."/>
            <person name="Robinson D.G."/>
            <person name="Roche D."/>
            <person name="Rouy Z."/>
            <person name="Saenampechek C."/>
            <person name="Salvignol G."/>
            <person name="Vallenet D."/>
            <person name="Wu Z."/>
            <person name="Marx C.J."/>
            <person name="Vorholt J.A."/>
            <person name="Olson M.V."/>
            <person name="Kaul R."/>
            <person name="Weissenbach J."/>
            <person name="Medigue C."/>
            <person name="Lidstrom M.E."/>
        </authorList>
    </citation>
    <scope>NUCLEOTIDE SEQUENCE [LARGE SCALE GENOMIC DNA]</scope>
    <source>
        <strain>ATCC 14718 / DSM 1338 / JCM 2805 / NCIMB 9133 / AM1</strain>
    </source>
</reference>
<reference key="3">
    <citation type="journal article" date="1999" name="Eur. J. Biochem.">
        <title>A methenyl tetrahydromethanopterin cyclohydrolase and a methenyl tetrahydrofolate cyclohydrolase in Methylobacterium extorquens AM1.</title>
        <authorList>
            <person name="Pomper B.K."/>
            <person name="Vorholt J.A."/>
            <person name="Chistoserdova L.V."/>
            <person name="Lidstrom M.E."/>
            <person name="Thauer R.K."/>
        </authorList>
    </citation>
    <scope>CHARACTERIZATION</scope>
    <scope>PROTEIN SEQUENCE OF 1-15</scope>
</reference>
<proteinExistence type="evidence at protein level"/>
<protein>
    <recommendedName>
        <fullName>Methenyltetrahydromethanopterin cyclohydrolase</fullName>
        <ecNumber>3.5.4.27</ecNumber>
    </recommendedName>
    <alternativeName>
        <fullName>Methenyl-H4MPT cyclohydrolase</fullName>
    </alternativeName>
</protein>
<accession>O85014</accession>
<accession>C5B142</accession>
<sequence>MSSNTSAPSLNALAGPLVESLVADAAKLRLIVAQENGARTVDAGANARGSIEAGRRIAEICLGGLGTVTIAPIGPVASWPYTVVVHSADPVLACLGSQYAGWSLADEEGDSGFFALGSGPGRAVAVVEELYKELGYRDNATTTALVLESGSAPPASVVNKVAAATGLAPENVTFIYAPTQSLAGSTQVVARVLEVALHKAHTVGFDLHKILDGIGSAPLSPPHPDFIQAMGRTNDAIIYGGRVQLFVDADDADAKQLAEQIPSTTSADHGAPFAEIFSRVNGDFYKIDGALFSPAEAIVTSVKTGKSFRGGRLEPQLVDASFV</sequence>
<comment type="function">
    <text>Catalyzes the hydrolysis of methenyl-H(4)MPT(+) to 5-formyl-H(4)MPT.</text>
</comment>
<comment type="catalytic activity">
    <reaction>
        <text>5,10-methenyl-5,6,7,8-tetrahydromethanopterin + H2O = N(5)-formyl-5,6,7,8-tetrahydromethanopterin + H(+)</text>
        <dbReference type="Rhea" id="RHEA:19053"/>
        <dbReference type="ChEBI" id="CHEBI:15377"/>
        <dbReference type="ChEBI" id="CHEBI:15378"/>
        <dbReference type="ChEBI" id="CHEBI:58018"/>
        <dbReference type="ChEBI" id="CHEBI:58337"/>
        <dbReference type="EC" id="3.5.4.27"/>
    </reaction>
</comment>
<comment type="biophysicochemical properties">
    <phDependence>
        <text>Optimum pH is 8.5.</text>
    </phDependence>
    <temperatureDependence>
        <text>Optimum temperature is 40 degrees Celsius.</text>
    </temperatureDependence>
</comment>
<comment type="pathway">
    <text>One-carbon metabolism; formaldehyde degradation; formate from formaldehyde (H(4)MPT route): step 3/5.</text>
</comment>
<comment type="subunit">
    <text>Homodimer.</text>
</comment>
<comment type="subcellular location">
    <subcellularLocation>
        <location>Cytoplasm</location>
    </subcellularLocation>
</comment>
<comment type="miscellaneous">
    <text>Requires salt for optimal activity.</text>
</comment>
<comment type="similarity">
    <text evidence="1">Belongs to the MCH family.</text>
</comment>
<keyword id="KW-0963">Cytoplasm</keyword>
<keyword id="KW-0903">Direct protein sequencing</keyword>
<keyword id="KW-0378">Hydrolase</keyword>
<keyword id="KW-0554">One-carbon metabolism</keyword>
<keyword id="KW-1185">Reference proteome</keyword>
<gene>
    <name type="primary">mch</name>
    <name type="ordered locus">MexAM1_META1p1763</name>
</gene>
<organism>
    <name type="scientific">Methylorubrum extorquens (strain ATCC 14718 / DSM 1338 / JCM 2805 / NCIMB 9133 / AM1)</name>
    <name type="common">Methylobacterium extorquens</name>
    <dbReference type="NCBI Taxonomy" id="272630"/>
    <lineage>
        <taxon>Bacteria</taxon>
        <taxon>Pseudomonadati</taxon>
        <taxon>Pseudomonadota</taxon>
        <taxon>Alphaproteobacteria</taxon>
        <taxon>Hyphomicrobiales</taxon>
        <taxon>Methylobacteriaceae</taxon>
        <taxon>Methylorubrum</taxon>
    </lineage>
</organism>
<dbReference type="EC" id="3.5.4.27"/>
<dbReference type="EMBL" id="AF032114">
    <property type="protein sequence ID" value="AAC27022.1"/>
    <property type="molecule type" value="Genomic_DNA"/>
</dbReference>
<dbReference type="EMBL" id="CP001510">
    <property type="protein sequence ID" value="ACS39606.1"/>
    <property type="molecule type" value="Genomic_DNA"/>
</dbReference>
<dbReference type="RefSeq" id="WP_003597572.1">
    <property type="nucleotide sequence ID" value="NC_012808.1"/>
</dbReference>
<dbReference type="SMR" id="O85014"/>
<dbReference type="STRING" id="272630.MexAM1_META1p1763"/>
<dbReference type="KEGG" id="mea:Mex_1p1763"/>
<dbReference type="eggNOG" id="COG3252">
    <property type="taxonomic scope" value="Bacteria"/>
</dbReference>
<dbReference type="HOGENOM" id="CLU_876031_0_0_5"/>
<dbReference type="OrthoDB" id="241529at2"/>
<dbReference type="BioCyc" id="MetaCyc:MONOMER-4021"/>
<dbReference type="UniPathway" id="UPA00562">
    <property type="reaction ID" value="UER00703"/>
</dbReference>
<dbReference type="Proteomes" id="UP000009081">
    <property type="component" value="Chromosome"/>
</dbReference>
<dbReference type="GO" id="GO:0005737">
    <property type="term" value="C:cytoplasm"/>
    <property type="evidence" value="ECO:0007669"/>
    <property type="project" value="UniProtKB-SubCell"/>
</dbReference>
<dbReference type="GO" id="GO:0018759">
    <property type="term" value="F:methenyltetrahydromethanopterin cyclohydrolase activity"/>
    <property type="evidence" value="ECO:0007669"/>
    <property type="project" value="UniProtKB-UniRule"/>
</dbReference>
<dbReference type="GO" id="GO:0046294">
    <property type="term" value="P:formaldehyde catabolic process"/>
    <property type="evidence" value="ECO:0007669"/>
    <property type="project" value="UniProtKB-UniRule"/>
</dbReference>
<dbReference type="GO" id="GO:0006730">
    <property type="term" value="P:one-carbon metabolic process"/>
    <property type="evidence" value="ECO:0007669"/>
    <property type="project" value="UniProtKB-UniRule"/>
</dbReference>
<dbReference type="CDD" id="cd00545">
    <property type="entry name" value="MCH"/>
    <property type="match status" value="1"/>
</dbReference>
<dbReference type="Gene3D" id="3.10.340.11">
    <property type="entry name" value="Methenyltetrahydromethanopterin Cyclohydrolase, Chain A, domain 1"/>
    <property type="match status" value="1"/>
</dbReference>
<dbReference type="Gene3D" id="3.30.1030.10">
    <property type="entry name" value="Methenyltetrahydromethanopterin Cyclohydrolase, Chain A, domain 2"/>
    <property type="match status" value="1"/>
</dbReference>
<dbReference type="HAMAP" id="MF_00486">
    <property type="entry name" value="McH"/>
    <property type="match status" value="1"/>
</dbReference>
<dbReference type="InterPro" id="IPR003209">
    <property type="entry name" value="METHMP_CycHdrlase"/>
</dbReference>
<dbReference type="NCBIfam" id="TIGR03120">
    <property type="entry name" value="one_C_mch"/>
    <property type="match status" value="1"/>
</dbReference>
<dbReference type="Pfam" id="PF02289">
    <property type="entry name" value="MCH"/>
    <property type="match status" value="1"/>
</dbReference>
<dbReference type="SUPFAM" id="SSF56199">
    <property type="entry name" value="Methenyltetrahydromethanopterin cyclohydrolase"/>
    <property type="match status" value="1"/>
</dbReference>